<keyword id="KW-1003">Cell membrane</keyword>
<keyword id="KW-0169">Cobalamin biosynthesis</keyword>
<keyword id="KW-0170">Cobalt</keyword>
<keyword id="KW-0171">Cobalt transport</keyword>
<keyword id="KW-0406">Ion transport</keyword>
<keyword id="KW-0472">Membrane</keyword>
<keyword id="KW-1185">Reference proteome</keyword>
<keyword id="KW-0732">Signal</keyword>
<keyword id="KW-0812">Transmembrane</keyword>
<keyword id="KW-1133">Transmembrane helix</keyword>
<keyword id="KW-0813">Transport</keyword>
<feature type="signal peptide" evidence="1">
    <location>
        <begin position="1"/>
        <end position="26"/>
    </location>
</feature>
<feature type="chain" id="PRO_5000296263" description="Cobalt transport protein CbiM">
    <location>
        <begin position="27"/>
        <end position="250"/>
    </location>
</feature>
<feature type="transmembrane region" description="Helical" evidence="1">
    <location>
        <begin position="38"/>
        <end position="58"/>
    </location>
</feature>
<feature type="transmembrane region" description="Helical" evidence="1">
    <location>
        <begin position="68"/>
        <end position="88"/>
    </location>
</feature>
<feature type="transmembrane region" description="Helical" evidence="1">
    <location>
        <begin position="102"/>
        <end position="122"/>
    </location>
</feature>
<feature type="transmembrane region" description="Helical" evidence="1">
    <location>
        <begin position="134"/>
        <end position="154"/>
    </location>
</feature>
<feature type="transmembrane region" description="Helical" evidence="1">
    <location>
        <begin position="165"/>
        <end position="185"/>
    </location>
</feature>
<feature type="transmembrane region" description="Helical" evidence="1">
    <location>
        <begin position="209"/>
        <end position="229"/>
    </location>
</feature>
<dbReference type="EMBL" id="CP000885">
    <property type="protein sequence ID" value="ABX41760.1"/>
    <property type="molecule type" value="Genomic_DNA"/>
</dbReference>
<dbReference type="RefSeq" id="WP_012199414.1">
    <property type="nucleotide sequence ID" value="NC_010001.1"/>
</dbReference>
<dbReference type="SMR" id="A9KP98"/>
<dbReference type="STRING" id="357809.Cphy_1385"/>
<dbReference type="KEGG" id="cpy:Cphy_1385"/>
<dbReference type="eggNOG" id="COG0310">
    <property type="taxonomic scope" value="Bacteria"/>
</dbReference>
<dbReference type="HOGENOM" id="CLU_052508_3_0_9"/>
<dbReference type="OrthoDB" id="9809846at2"/>
<dbReference type="UniPathway" id="UPA00148"/>
<dbReference type="Proteomes" id="UP000000370">
    <property type="component" value="Chromosome"/>
</dbReference>
<dbReference type="GO" id="GO:0043190">
    <property type="term" value="C:ATP-binding cassette (ABC) transporter complex"/>
    <property type="evidence" value="ECO:0007669"/>
    <property type="project" value="InterPro"/>
</dbReference>
<dbReference type="GO" id="GO:0015087">
    <property type="term" value="F:cobalt ion transmembrane transporter activity"/>
    <property type="evidence" value="ECO:0007669"/>
    <property type="project" value="UniProtKB-UniRule"/>
</dbReference>
<dbReference type="GO" id="GO:0009236">
    <property type="term" value="P:cobalamin biosynthetic process"/>
    <property type="evidence" value="ECO:0007669"/>
    <property type="project" value="UniProtKB-UniRule"/>
</dbReference>
<dbReference type="FunFam" id="1.10.1760.20:FF:000001">
    <property type="entry name" value="Cobalt transport protein CbiM"/>
    <property type="match status" value="1"/>
</dbReference>
<dbReference type="Gene3D" id="1.10.1760.20">
    <property type="match status" value="1"/>
</dbReference>
<dbReference type="HAMAP" id="MF_01462">
    <property type="entry name" value="CbiM"/>
    <property type="match status" value="1"/>
</dbReference>
<dbReference type="InterPro" id="IPR018024">
    <property type="entry name" value="CbiM"/>
</dbReference>
<dbReference type="InterPro" id="IPR002751">
    <property type="entry name" value="CbiM/NikMN"/>
</dbReference>
<dbReference type="NCBIfam" id="TIGR00123">
    <property type="entry name" value="cbiM"/>
    <property type="match status" value="1"/>
</dbReference>
<dbReference type="NCBIfam" id="NF006184">
    <property type="entry name" value="PRK08319.1"/>
    <property type="match status" value="1"/>
</dbReference>
<dbReference type="PANTHER" id="PTHR43627">
    <property type="match status" value="1"/>
</dbReference>
<dbReference type="PANTHER" id="PTHR43627:SF1">
    <property type="entry name" value="COBALT TRANSPORT PROTEIN CBIM"/>
    <property type="match status" value="1"/>
</dbReference>
<dbReference type="Pfam" id="PF01891">
    <property type="entry name" value="CbiM"/>
    <property type="match status" value="1"/>
</dbReference>
<comment type="function">
    <text evidence="1">Part of the energy-coupling factor (ECF) transporter complex CbiMNOQ involved in cobalt import.</text>
</comment>
<comment type="pathway">
    <text evidence="1">Cofactor biosynthesis; adenosylcobalamin biosynthesis.</text>
</comment>
<comment type="subunit">
    <text evidence="1">Forms an energy-coupling factor (ECF) transporter complex composed of an ATP-binding protein (A component, CbiO), a transmembrane protein (T component, CbiQ) and 2 possible substrate-capture proteins (S components, CbiM and CbiN) of unknown stoichimetry.</text>
</comment>
<comment type="subcellular location">
    <subcellularLocation>
        <location evidence="1">Cell membrane</location>
        <topology evidence="1">Multi-pass membrane protein</topology>
    </subcellularLocation>
</comment>
<comment type="similarity">
    <text evidence="1">Belongs to the CbiM family.</text>
</comment>
<evidence type="ECO:0000255" key="1">
    <source>
        <dbReference type="HAMAP-Rule" id="MF_01462"/>
    </source>
</evidence>
<sequence length="250" mass="26157">MNKKEKRIVAIAAAFALCFGISPAVNAMHIMEGYLPPKYCITWGILSIPFLVAGYFSIKKTVSKQHRSITMLAMAGAFVFVLSSLKIPSVTGSCSHMTGTGLGAILFGPSAVSILGIIVLIFQAILLAHGGLTTLGANTFSMAIAGPFVSFGIYKLCQKLKVNKLSGIFLAAFVGDLFTYCVTSIQLALAYPSSNGGVGASALKFLAVFAPTQVPLAIIEGILTVVIMIGLETYAKAELNDLGLVNGGIN</sequence>
<gene>
    <name evidence="1" type="primary">cbiM</name>
    <name type="ordered locus">Cphy_1385</name>
</gene>
<organism>
    <name type="scientific">Lachnoclostridium phytofermentans (strain ATCC 700394 / DSM 18823 / ISDg)</name>
    <name type="common">Clostridium phytofermentans</name>
    <dbReference type="NCBI Taxonomy" id="357809"/>
    <lineage>
        <taxon>Bacteria</taxon>
        <taxon>Bacillati</taxon>
        <taxon>Bacillota</taxon>
        <taxon>Clostridia</taxon>
        <taxon>Lachnospirales</taxon>
        <taxon>Lachnospiraceae</taxon>
    </lineage>
</organism>
<reference key="1">
    <citation type="submission" date="2007-11" db="EMBL/GenBank/DDBJ databases">
        <title>Complete genome sequence of Clostridium phytofermentans ISDg.</title>
        <authorList>
            <person name="Leschine S.B."/>
            <person name="Warnick T.A."/>
            <person name="Blanchard J.L."/>
            <person name="Schnell D.J."/>
            <person name="Petit E.L."/>
            <person name="LaTouf W.G."/>
            <person name="Copeland A."/>
            <person name="Lucas S."/>
            <person name="Lapidus A."/>
            <person name="Barry K."/>
            <person name="Glavina del Rio T."/>
            <person name="Dalin E."/>
            <person name="Tice H."/>
            <person name="Pitluck S."/>
            <person name="Kiss H."/>
            <person name="Brettin T."/>
            <person name="Bruce D."/>
            <person name="Detter J.C."/>
            <person name="Han C."/>
            <person name="Kuske C."/>
            <person name="Schmutz J."/>
            <person name="Larimer F."/>
            <person name="Land M."/>
            <person name="Hauser L."/>
            <person name="Kyrpides N."/>
            <person name="Kim E.A."/>
            <person name="Richardson P."/>
        </authorList>
    </citation>
    <scope>NUCLEOTIDE SEQUENCE [LARGE SCALE GENOMIC DNA]</scope>
    <source>
        <strain>ATCC 700394 / DSM 18823 / ISDg</strain>
    </source>
</reference>
<proteinExistence type="inferred from homology"/>
<name>CBIM_LACP7</name>
<accession>A9KP98</accession>
<protein>
    <recommendedName>
        <fullName evidence="1">Cobalt transport protein CbiM</fullName>
    </recommendedName>
    <alternativeName>
        <fullName evidence="1">Energy-coupling factor transporter probable substrate-capture protein CbiM</fullName>
        <shortName evidence="1">ECF transporter S component CbiM</shortName>
    </alternativeName>
</protein>